<comment type="function">
    <text evidence="1">Salivary protein that inhibits the alternative pathway of complement system activation in the host while having no inhibitory effect on the classical pathway (PubMed:33199367). Inhibits activity of activated host C3-convertase complex C3bBb (C3-CFB) (PubMed:33199367). Enhances accumulation of C3bBb on immobilized properdin (PubMed:33199367).</text>
</comment>
<comment type="activity regulation">
    <text evidence="1">The activity is increased in the presence of host properdin (CFP).</text>
</comment>
<comment type="subcellular location">
    <subcellularLocation>
        <location evidence="3">Secreted</location>
    </subcellularLocation>
</comment>
<accession>C0HMB5</accession>
<name>GSG7_ANOFR</name>
<protein>
    <recommendedName>
        <fullName evidence="2">gSG7 salivary protein</fullName>
        <shortName evidence="2">SG7.AF</shortName>
    </recommendedName>
</protein>
<feature type="chain" id="PRO_0000460694" description="gSG7 salivary protein">
    <location>
        <begin position="1"/>
        <end position="119"/>
    </location>
</feature>
<feature type="disulfide bond" evidence="1 5">
    <location>
        <begin position="58"/>
        <end position="113"/>
    </location>
</feature>
<feature type="disulfide bond" evidence="1 5">
    <location>
        <begin position="81"/>
        <end position="91"/>
    </location>
</feature>
<organism>
    <name type="scientific">Anopheles freeborni</name>
    <name type="common">Western malaria mosquito</name>
    <dbReference type="NCBI Taxonomy" id="7170"/>
    <lineage>
        <taxon>Eukaryota</taxon>
        <taxon>Metazoa</taxon>
        <taxon>Ecdysozoa</taxon>
        <taxon>Arthropoda</taxon>
        <taxon>Hexapoda</taxon>
        <taxon>Insecta</taxon>
        <taxon>Pterygota</taxon>
        <taxon>Neoptera</taxon>
        <taxon>Endopterygota</taxon>
        <taxon>Diptera</taxon>
        <taxon>Nematocera</taxon>
        <taxon>Culicoidea</taxon>
        <taxon>Culicidae</taxon>
        <taxon>Anophelinae</taxon>
        <taxon>Anopheles</taxon>
    </lineage>
</organism>
<dbReference type="PDB" id="6XL7">
    <property type="method" value="X-ray"/>
    <property type="resolution" value="1.42 A"/>
    <property type="chains" value="A=1-119"/>
</dbReference>
<dbReference type="PDBsum" id="6XL7"/>
<dbReference type="SMR" id="C0HMB5"/>
<dbReference type="GO" id="GO:0005576">
    <property type="term" value="C:extracellular region"/>
    <property type="evidence" value="ECO:0007669"/>
    <property type="project" value="UniProtKB-SubCell"/>
</dbReference>
<dbReference type="GO" id="GO:0090729">
    <property type="term" value="F:toxin activity"/>
    <property type="evidence" value="ECO:0007669"/>
    <property type="project" value="UniProtKB-KW"/>
</dbReference>
<dbReference type="InterPro" id="IPR056799">
    <property type="entry name" value="ALL3/gSG7_salivary-like_helix"/>
</dbReference>
<dbReference type="Pfam" id="PF25001">
    <property type="entry name" value="Aegyptin_C"/>
    <property type="match status" value="1"/>
</dbReference>
<evidence type="ECO:0000269" key="1">
    <source>
    </source>
</evidence>
<evidence type="ECO:0000303" key="2">
    <source>
    </source>
</evidence>
<evidence type="ECO:0000305" key="3"/>
<evidence type="ECO:0000312" key="4">
    <source>
        <dbReference type="PDB" id="6XL7"/>
    </source>
</evidence>
<evidence type="ECO:0007744" key="5">
    <source>
        <dbReference type="PDB" id="6XL7"/>
    </source>
</evidence>
<proteinExistence type="evidence at protein level"/>
<keyword id="KW-0002">3D-structure</keyword>
<keyword id="KW-1216">Complement system impairing toxin</keyword>
<keyword id="KW-1015">Disulfide bond</keyword>
<keyword id="KW-0964">Secreted</keyword>
<keyword id="KW-0800">Toxin</keyword>
<reference evidence="4" key="1">
    <citation type="journal article" date="2021" name="J. Biol. Chem.">
        <title>Salivary complement inhibitors from mosquitoes: Structure and mechanism of action.</title>
        <authorList>
            <person name="Strayer E.C."/>
            <person name="Lu S."/>
            <person name="Ribeiro J."/>
            <person name="Andersen J.F."/>
        </authorList>
    </citation>
    <scope>X-RAY CRYSTALLOGRAPHY (1.42 ANGSTROMS)</scope>
    <scope>FUNCTION</scope>
    <scope>ACTIVITY REGULATION</scope>
    <scope>DISULFIDE BONDS</scope>
</reference>
<sequence>ARKHVQELLKTFRRIDFDETRKSVYLQSAKFGVQSQLREPLTKKVLNYWDDVKLSKTCLDRMVTKVNDVKETFYAGFSYACESHNQYSVDCLEAAKPSYLTALGEIRGETEKCLTTRLK</sequence>